<proteinExistence type="inferred from homology"/>
<gene>
    <name evidence="1" type="primary">tatD</name>
    <name type="ordered locus">Dda3937_02068</name>
</gene>
<sequence>MFDIGVNLTSSQFRSDREQVVARARQAGVTGLLLTGTSVEESEQACLLAAQYPDYCGSTAGVHPHDASGWNDDTADLIHQLAGREQVLAIGECGLDFNRNFSTPQEQEQAFSAQLAIAAERAMPVFLHCRDAHARFMALLTPWLDKLPAAVLHCFTGSGDELDDSLRAGLMIGITGWVCDERRGLALRALLPRIPDDRLLLETDAPYLLPRDLHPKPASRRNEPCFLPHIVRQVAAWRGQDAEWLGRNVDENARRIFRPGQRGE</sequence>
<reference key="1">
    <citation type="journal article" date="2011" name="J. Bacteriol.">
        <title>Genome sequence of the plant-pathogenic bacterium Dickeya dadantii 3937.</title>
        <authorList>
            <person name="Glasner J.D."/>
            <person name="Yang C.H."/>
            <person name="Reverchon S."/>
            <person name="Hugouvieux-Cotte-Pattat N."/>
            <person name="Condemine G."/>
            <person name="Bohin J.P."/>
            <person name="Van Gijsegem F."/>
            <person name="Yang S."/>
            <person name="Franza T."/>
            <person name="Expert D."/>
            <person name="Plunkett G. III"/>
            <person name="San Francisco M.J."/>
            <person name="Charkowski A.O."/>
            <person name="Py B."/>
            <person name="Bell K."/>
            <person name="Rauscher L."/>
            <person name="Rodriguez-Palenzuela P."/>
            <person name="Toussaint A."/>
            <person name="Holeva M.C."/>
            <person name="He S.Y."/>
            <person name="Douet V."/>
            <person name="Boccara M."/>
            <person name="Blanco C."/>
            <person name="Toth I."/>
            <person name="Anderson B.D."/>
            <person name="Biehl B.S."/>
            <person name="Mau B."/>
            <person name="Flynn S.M."/>
            <person name="Barras F."/>
            <person name="Lindeberg M."/>
            <person name="Birch P.R."/>
            <person name="Tsuyumu S."/>
            <person name="Shi X."/>
            <person name="Hibbing M."/>
            <person name="Yap M.N."/>
            <person name="Carpentier M."/>
            <person name="Dassa E."/>
            <person name="Umehara M."/>
            <person name="Kim J.F."/>
            <person name="Rusch M."/>
            <person name="Soni P."/>
            <person name="Mayhew G.F."/>
            <person name="Fouts D.E."/>
            <person name="Gill S.R."/>
            <person name="Blattner F.R."/>
            <person name="Keen N.T."/>
            <person name="Perna N.T."/>
        </authorList>
    </citation>
    <scope>NUCLEOTIDE SEQUENCE [LARGE SCALE GENOMIC DNA]</scope>
    <source>
        <strain>3937</strain>
    </source>
</reference>
<keyword id="KW-0963">Cytoplasm</keyword>
<keyword id="KW-0269">Exonuclease</keyword>
<keyword id="KW-0378">Hydrolase</keyword>
<keyword id="KW-0460">Magnesium</keyword>
<keyword id="KW-0479">Metal-binding</keyword>
<keyword id="KW-0540">Nuclease</keyword>
<keyword id="KW-1185">Reference proteome</keyword>
<comment type="function">
    <text evidence="1">3'-5' exonuclease that prefers single-stranded DNA and RNA. May play a role in the H(2)O(2)-induced DNA damage repair.</text>
</comment>
<comment type="cofactor">
    <cofactor evidence="1">
        <name>Mg(2+)</name>
        <dbReference type="ChEBI" id="CHEBI:18420"/>
    </cofactor>
</comment>
<comment type="subunit">
    <text evidence="1">Monomer.</text>
</comment>
<comment type="subcellular location">
    <subcellularLocation>
        <location evidence="1">Cytoplasm</location>
    </subcellularLocation>
</comment>
<comment type="similarity">
    <text evidence="1">Belongs to the metallo-dependent hydrolases superfamily. TatD-type hydrolase family. TatD subfamily.</text>
</comment>
<organism>
    <name type="scientific">Dickeya dadantii (strain 3937)</name>
    <name type="common">Erwinia chrysanthemi (strain 3937)</name>
    <dbReference type="NCBI Taxonomy" id="198628"/>
    <lineage>
        <taxon>Bacteria</taxon>
        <taxon>Pseudomonadati</taxon>
        <taxon>Pseudomonadota</taxon>
        <taxon>Gammaproteobacteria</taxon>
        <taxon>Enterobacterales</taxon>
        <taxon>Pectobacteriaceae</taxon>
        <taxon>Dickeya</taxon>
    </lineage>
</organism>
<evidence type="ECO:0000255" key="1">
    <source>
        <dbReference type="HAMAP-Rule" id="MF_00901"/>
    </source>
</evidence>
<accession>E0SLH6</accession>
<dbReference type="EC" id="3.1.11.-" evidence="1"/>
<dbReference type="EC" id="3.1.13.-" evidence="1"/>
<dbReference type="EMBL" id="CP002038">
    <property type="protein sequence ID" value="ADN00498.1"/>
    <property type="molecule type" value="Genomic_DNA"/>
</dbReference>
<dbReference type="RefSeq" id="WP_013319895.1">
    <property type="nucleotide sequence ID" value="NC_014500.1"/>
</dbReference>
<dbReference type="SMR" id="E0SLH6"/>
<dbReference type="STRING" id="198628.Dda3937_02068"/>
<dbReference type="KEGG" id="ddd:Dda3937_02068"/>
<dbReference type="PATRIC" id="fig|198628.6.peg.4249"/>
<dbReference type="eggNOG" id="COG0084">
    <property type="taxonomic scope" value="Bacteria"/>
</dbReference>
<dbReference type="HOGENOM" id="CLU_031506_1_2_6"/>
<dbReference type="OrthoDB" id="9810005at2"/>
<dbReference type="Proteomes" id="UP000006859">
    <property type="component" value="Chromosome"/>
</dbReference>
<dbReference type="GO" id="GO:0005737">
    <property type="term" value="C:cytoplasm"/>
    <property type="evidence" value="ECO:0007669"/>
    <property type="project" value="UniProtKB-SubCell"/>
</dbReference>
<dbReference type="GO" id="GO:0000175">
    <property type="term" value="F:3'-5'-RNA exonuclease activity"/>
    <property type="evidence" value="ECO:0007669"/>
    <property type="project" value="UniProtKB-UniRule"/>
</dbReference>
<dbReference type="GO" id="GO:0000287">
    <property type="term" value="F:magnesium ion binding"/>
    <property type="evidence" value="ECO:0007669"/>
    <property type="project" value="UniProtKB-UniRule"/>
</dbReference>
<dbReference type="GO" id="GO:0008310">
    <property type="term" value="F:single-stranded DNA 3'-5' DNA exonuclease activity"/>
    <property type="evidence" value="ECO:0007669"/>
    <property type="project" value="UniProtKB-UniRule"/>
</dbReference>
<dbReference type="CDD" id="cd01310">
    <property type="entry name" value="TatD_DNAse"/>
    <property type="match status" value="1"/>
</dbReference>
<dbReference type="FunFam" id="3.20.20.140:FF:000018">
    <property type="entry name" value="3'-5' ssDNA/RNA exonuclease TatD"/>
    <property type="match status" value="1"/>
</dbReference>
<dbReference type="Gene3D" id="3.20.20.140">
    <property type="entry name" value="Metal-dependent hydrolases"/>
    <property type="match status" value="1"/>
</dbReference>
<dbReference type="HAMAP" id="MF_00901">
    <property type="entry name" value="TatD_exonuclease"/>
    <property type="match status" value="1"/>
</dbReference>
<dbReference type="InterPro" id="IPR018228">
    <property type="entry name" value="DNase_TatD-rel_CS"/>
</dbReference>
<dbReference type="InterPro" id="IPR024918">
    <property type="entry name" value="Exonuc_TatD"/>
</dbReference>
<dbReference type="InterPro" id="IPR032466">
    <property type="entry name" value="Metal_Hydrolase"/>
</dbReference>
<dbReference type="InterPro" id="IPR001130">
    <property type="entry name" value="TatD-like"/>
</dbReference>
<dbReference type="InterPro" id="IPR050891">
    <property type="entry name" value="TatD-type_Hydrolase"/>
</dbReference>
<dbReference type="NCBIfam" id="NF007745">
    <property type="entry name" value="PRK10425.1"/>
    <property type="match status" value="1"/>
</dbReference>
<dbReference type="PANTHER" id="PTHR10060:SF15">
    <property type="entry name" value="DEOXYRIBONUCLEASE TATDN1"/>
    <property type="match status" value="1"/>
</dbReference>
<dbReference type="PANTHER" id="PTHR10060">
    <property type="entry name" value="TATD FAMILY DEOXYRIBONUCLEASE"/>
    <property type="match status" value="1"/>
</dbReference>
<dbReference type="Pfam" id="PF01026">
    <property type="entry name" value="TatD_DNase"/>
    <property type="match status" value="1"/>
</dbReference>
<dbReference type="PIRSF" id="PIRSF005902">
    <property type="entry name" value="DNase_TatD"/>
    <property type="match status" value="1"/>
</dbReference>
<dbReference type="SUPFAM" id="SSF51556">
    <property type="entry name" value="Metallo-dependent hydrolases"/>
    <property type="match status" value="1"/>
</dbReference>
<dbReference type="PROSITE" id="PS01091">
    <property type="entry name" value="TATD_3"/>
    <property type="match status" value="1"/>
</dbReference>
<protein>
    <recommendedName>
        <fullName evidence="1">3'-5' ssDNA/RNA exonuclease TatD</fullName>
        <ecNumber evidence="1">3.1.11.-</ecNumber>
        <ecNumber evidence="1">3.1.13.-</ecNumber>
    </recommendedName>
    <alternativeName>
        <fullName evidence="1">DNase TatD</fullName>
    </alternativeName>
</protein>
<name>TATD_DICD3</name>
<feature type="chain" id="PRO_0000412733" description="3'-5' ssDNA/RNA exonuclease TatD">
    <location>
        <begin position="1"/>
        <end position="264"/>
    </location>
</feature>
<feature type="binding site" evidence="1">
    <location>
        <position position="92"/>
    </location>
    <ligand>
        <name>a divalent metal cation</name>
        <dbReference type="ChEBI" id="CHEBI:60240"/>
    </ligand>
</feature>
<feature type="binding site" evidence="1">
    <location>
        <position position="128"/>
    </location>
    <ligand>
        <name>a divalent metal cation</name>
        <dbReference type="ChEBI" id="CHEBI:60240"/>
    </ligand>
</feature>
<feature type="binding site" evidence="1">
    <location>
        <position position="153"/>
    </location>
    <ligand>
        <name>a divalent metal cation</name>
        <dbReference type="ChEBI" id="CHEBI:60240"/>
    </ligand>
</feature>